<sequence length="252" mass="29423">MEDFVRQCFNPMIVELAEKTMKEYGEDLKIETNKFAAICTHLEVCFMYSDFHFINEQGESIIVELGDPNALLKHRFEIIEGRDRTMAWTVVNSICNTTGAEKPKFLPDLYDYKENRFIEIGVTRREVHIYYLEKANKIKSEKTHIHIFSFTGEEMATKADYTLDEESRARIKTRLFTIRQEMASRGLWDSFVSPREEKRQLKKGLKSQEQCASLPTKVSRRTSPALKILEPMWMDSNRTATLRASCLKCPKK</sequence>
<comment type="function">
    <text evidence="1 4">Plays a major role in the shutoff of the host protein expression by cleaving mRNAs probably via an endonuclease activity. This host shutoff allows the virus to escape from the host antiviral response (By similarity). Hijacks host RNA splicing machinery to selectively target host RNAs containing introns for destruction. This may explain the preferential degradation of RNAs that have undergone co- or post-transcriptional processing (By similarity).</text>
</comment>
<comment type="subcellular location">
    <subcellularLocation>
        <location evidence="4">Host cytoplasm</location>
    </subcellularLocation>
    <subcellularLocation>
        <location evidence="4">Host nucleus</location>
    </subcellularLocation>
</comment>
<comment type="alternative products">
    <event type="ribosomal frameshifting"/>
    <isoform>
        <id>P0DJU2-1</id>
        <name>PA-X</name>
        <sequence type="displayed"/>
    </isoform>
    <isoform>
        <id>B4URE3-1</id>
        <name>PA</name>
        <sequence type="external"/>
    </isoform>
</comment>
<comment type="domain">
    <text evidence="1 4">The probable endonuclease active site in the N-terminus and the basic amino acid cluster in the C-terminus are important for the shutoff activity. The C-terminus acts as a nuclear localization signal (By similarity). The C-terminus is recruited to host protein complexes involved in nuclear Pol II RNA processing (By similarity).</text>
</comment>
<comment type="similarity">
    <text evidence="6">Belongs to the influenza viruses PA-X family.</text>
</comment>
<proteinExistence type="inferred from homology"/>
<organismHost>
    <name type="scientific">Aves</name>
    <dbReference type="NCBI Taxonomy" id="8782"/>
</organismHost>
<organismHost>
    <name type="scientific">Homo sapiens</name>
    <name type="common">Human</name>
    <dbReference type="NCBI Taxonomy" id="9606"/>
</organismHost>
<organismHost>
    <name type="scientific">Sus scrofa</name>
    <name type="common">Pig</name>
    <dbReference type="NCBI Taxonomy" id="9823"/>
</organismHost>
<organism>
    <name type="scientific">Influenza A virus (strain A/Russia:St.Petersburg/8/2006 H1N1)</name>
    <dbReference type="NCBI Taxonomy" id="518998"/>
    <lineage>
        <taxon>Viruses</taxon>
        <taxon>Riboviria</taxon>
        <taxon>Orthornavirae</taxon>
        <taxon>Negarnaviricota</taxon>
        <taxon>Polyploviricotina</taxon>
        <taxon>Insthoviricetes</taxon>
        <taxon>Articulavirales</taxon>
        <taxon>Orthomyxoviridae</taxon>
        <taxon>Alphainfluenzavirus</taxon>
        <taxon>Alphainfluenzavirus influenzae</taxon>
        <taxon>Influenza A virus</taxon>
    </lineage>
</organism>
<keyword id="KW-1132">Decay of host mRNAs by virus</keyword>
<keyword id="KW-1262">Eukaryotic host gene expression shutoff by virus</keyword>
<keyword id="KW-1035">Host cytoplasm</keyword>
<keyword id="KW-1190">Host gene expression shutoff by virus</keyword>
<keyword id="KW-1192">Host mRNA suppression by virus</keyword>
<keyword id="KW-1048">Host nucleus</keyword>
<keyword id="KW-0945">Host-virus interaction</keyword>
<keyword id="KW-0688">Ribosomal frameshifting</keyword>
<accession>P0DJU2</accession>
<dbReference type="EMBL" id="CY034129">
    <property type="status" value="NOT_ANNOTATED_CDS"/>
    <property type="molecule type" value="Viral_cRNA"/>
</dbReference>
<dbReference type="SMR" id="P0DJU2"/>
<dbReference type="Proteomes" id="UP000008081">
    <property type="component" value="Genome"/>
</dbReference>
<dbReference type="GO" id="GO:0003723">
    <property type="term" value="F:RNA binding"/>
    <property type="evidence" value="ECO:0007669"/>
    <property type="project" value="InterPro"/>
</dbReference>
<dbReference type="GO" id="GO:0039694">
    <property type="term" value="P:viral RNA genome replication"/>
    <property type="evidence" value="ECO:0007669"/>
    <property type="project" value="InterPro"/>
</dbReference>
<dbReference type="GO" id="GO:0075523">
    <property type="term" value="P:viral translational frameshifting"/>
    <property type="evidence" value="ECO:0007669"/>
    <property type="project" value="UniProtKB-KW"/>
</dbReference>
<dbReference type="FunFam" id="3.40.91.90:FF:000001">
    <property type="entry name" value="Polymerase acidic protein"/>
    <property type="match status" value="1"/>
</dbReference>
<dbReference type="Gene3D" id="3.40.91.90">
    <property type="entry name" value="Influenza RNA-dependent RNA polymerase subunit PA, endonuclease domain"/>
    <property type="match status" value="1"/>
</dbReference>
<dbReference type="InterPro" id="IPR001009">
    <property type="entry name" value="PA/PA-X"/>
</dbReference>
<dbReference type="InterPro" id="IPR038372">
    <property type="entry name" value="PA/PA-X_sf"/>
</dbReference>
<dbReference type="Pfam" id="PF00603">
    <property type="entry name" value="Flu_PA"/>
    <property type="match status" value="1"/>
</dbReference>
<name>PAX_I06A0</name>
<evidence type="ECO:0000250" key="1">
    <source>
        <dbReference type="UniProtKB" id="P0CK64"/>
    </source>
</evidence>
<evidence type="ECO:0000250" key="2">
    <source>
        <dbReference type="UniProtKB" id="P0CK68"/>
    </source>
</evidence>
<evidence type="ECO:0000250" key="3">
    <source>
        <dbReference type="UniProtKB" id="P0DJW8"/>
    </source>
</evidence>
<evidence type="ECO:0000250" key="4">
    <source>
        <dbReference type="UniProtKB" id="P0DXO5"/>
    </source>
</evidence>
<evidence type="ECO:0000250" key="5">
    <source>
        <dbReference type="UniProtKB" id="P0DXO6"/>
    </source>
</evidence>
<evidence type="ECO:0000305" key="6"/>
<gene>
    <name type="primary">PA</name>
</gene>
<protein>
    <recommendedName>
        <fullName>Protein PA-X</fullName>
    </recommendedName>
</protein>
<reference key="1">
    <citation type="submission" date="2008-07" db="EMBL/GenBank/DDBJ databases">
        <title>The NIAID influenza genome sequencing project.</title>
        <authorList>
            <person name="Spiro D."/>
            <person name="Halpin R."/>
            <person name="Boyne A."/>
            <person name="Bera J."/>
            <person name="Ghedin E."/>
            <person name="Hostetler J."/>
            <person name="Fedorova N."/>
            <person name="Hine E."/>
            <person name="Overton L."/>
            <person name="Djuric K."/>
            <person name="Sarmiento M."/>
            <person name="Sitz J."/>
            <person name="Katzel D."/>
            <person name="Manojkumar R."/>
            <person name="Devis R."/>
            <person name="Fulvini A."/>
            <person name="Silverman J."/>
            <person name="Le J."/>
            <person name="Kilbourne E.D."/>
            <person name="Pokorny B."/>
            <person name="Bucher D."/>
            <person name="Orff E."/>
            <person name="Minieri J."/>
            <person name="Onodera S."/>
            <person name="Huang L."/>
            <person name="Bao Y."/>
            <person name="Sanders R."/>
            <person name="Dernovoy D."/>
            <person name="Kiryutin B."/>
            <person name="Lipman D.J."/>
            <person name="Tatusova T."/>
        </authorList>
    </citation>
    <scope>NUCLEOTIDE SEQUENCE [GENOMIC RNA]</scope>
</reference>
<reference key="2">
    <citation type="submission" date="2008-07" db="EMBL/GenBank/DDBJ databases">
        <authorList>
            <consortium name="The NIAID Influenza Genome Sequencing Consortium"/>
        </authorList>
    </citation>
    <scope>NUCLEOTIDE SEQUENCE [GENOMIC RNA]</scope>
</reference>
<feature type="chain" id="PRO_0000419405" description="Protein PA-X">
    <location>
        <begin position="1"/>
        <end position="252"/>
    </location>
</feature>
<feature type="active site" evidence="2">
    <location>
        <position position="80"/>
    </location>
</feature>
<feature type="active site" evidence="2">
    <location>
        <position position="108"/>
    </location>
</feature>
<feature type="site" description="Important for efficient shutoff activity" evidence="5">
    <location>
        <position position="28"/>
    </location>
</feature>
<feature type="site" description="Important for efficient shutoff activity and nuclear localization" evidence="4">
    <location>
        <position position="195"/>
    </location>
</feature>
<feature type="site" description="Important for efficient shutoff activity and nuclear localization" evidence="4">
    <location>
        <position position="198"/>
    </location>
</feature>
<feature type="site" description="Important for efficient shutoff activity and nuclear localization" evidence="4">
    <location>
        <position position="199"/>
    </location>
</feature>
<feature type="site" description="Important for efficient shutoff activity" evidence="3">
    <location>
        <position position="202"/>
    </location>
</feature>
<feature type="site" description="Important for efficient shutoff activity" evidence="3">
    <location>
        <position position="203"/>
    </location>
</feature>
<feature type="site" description="Important for efficient shutoff activity" evidence="3">
    <location>
        <position position="206"/>
    </location>
</feature>